<organism>
    <name type="scientific">Sagiyama virus</name>
    <name type="common">SAGV</name>
    <dbReference type="NCBI Taxonomy" id="59303"/>
    <lineage>
        <taxon>Viruses</taxon>
        <taxon>Riboviria</taxon>
        <taxon>Orthornavirae</taxon>
        <taxon>Kitrinoviricota</taxon>
        <taxon>Alsuviricetes</taxon>
        <taxon>Martellivirales</taxon>
        <taxon>Togaviridae</taxon>
        <taxon>Alphavirus</taxon>
        <taxon>Getah virus</taxon>
    </lineage>
</organism>
<accession>Q9JGL0</accession>
<accession>Q9JGK9</accession>
<feature type="chain" id="PRO_0000308402" description="Polyprotein P1234">
    <location>
        <begin position="1"/>
        <end position="2467"/>
    </location>
</feature>
<feature type="chain" id="PRO_0000228781" description="Polyprotein P123'">
    <location>
        <begin position="1"/>
        <end position="1856"/>
    </location>
</feature>
<feature type="chain" id="PRO_0000228782" description="Polyprotein P123">
    <location>
        <begin position="1"/>
        <end position="1849"/>
    </location>
</feature>
<feature type="chain" id="PRO_0000228783" description="mRNA-capping enzyme nsP1">
    <location>
        <begin position="1"/>
        <end position="534"/>
    </location>
</feature>
<feature type="chain" id="PRO_0000228784" description="Protease nsP2">
    <location>
        <begin position="535"/>
        <end position="1332"/>
    </location>
</feature>
<feature type="chain" id="PRO_0000228786" description="Non-structural protein 3'">
    <location>
        <begin position="1333"/>
        <end position="1856"/>
    </location>
</feature>
<feature type="chain" id="PRO_0000228785" description="Non-structural protein 3">
    <location>
        <begin position="1333"/>
        <end position="1849"/>
    </location>
</feature>
<feature type="chain" id="PRO_0000228787" description="RNA-directed RNA polymerase nsP4">
    <location>
        <begin position="1857"/>
        <end position="2467"/>
    </location>
</feature>
<feature type="domain" description="Alphavirus-like MT" evidence="11">
    <location>
        <begin position="27"/>
        <end position="258"/>
    </location>
</feature>
<feature type="domain" description="(+)RNA virus helicase ATP-binding" evidence="10">
    <location>
        <begin position="689"/>
        <end position="841"/>
    </location>
</feature>
<feature type="domain" description="(+)RNA virus helicase C-terminal" evidence="10">
    <location>
        <begin position="842"/>
        <end position="990"/>
    </location>
</feature>
<feature type="domain" description="Peptidase C9" evidence="9">
    <location>
        <begin position="1003"/>
        <end position="1325"/>
    </location>
</feature>
<feature type="domain" description="Macro" evidence="7">
    <location>
        <begin position="1332"/>
        <end position="1492"/>
    </location>
</feature>
<feature type="domain" description="RdRp catalytic" evidence="8">
    <location>
        <begin position="2222"/>
        <end position="2337"/>
    </location>
</feature>
<feature type="region of interest" description="NsP1 membrane-binding" evidence="3">
    <location>
        <begin position="243"/>
        <end position="262"/>
    </location>
</feature>
<feature type="region of interest" description="Nucleolus localization signal" evidence="3">
    <location>
        <begin position="1004"/>
        <end position="1023"/>
    </location>
</feature>
<feature type="region of interest" description="Disordered" evidence="12">
    <location>
        <begin position="1766"/>
        <end position="1803"/>
    </location>
</feature>
<feature type="short sequence motif" description="Nuclear export signal" evidence="4">
    <location>
        <begin position="1056"/>
        <end position="1065"/>
    </location>
</feature>
<feature type="short sequence motif" description="Nuclear localization signal" evidence="3">
    <location>
        <begin position="1180"/>
        <end position="1184"/>
    </location>
</feature>
<feature type="short sequence motif" description="FGDF; binding to host G3BP1" evidence="3">
    <location>
        <begin position="1820"/>
        <end position="1823"/>
    </location>
</feature>
<feature type="short sequence motif" description="FGDF; binding to host G3BP1" evidence="3">
    <location>
        <begin position="1841"/>
        <end position="1844"/>
    </location>
</feature>
<feature type="compositionally biased region" description="Pro residues" evidence="12">
    <location>
        <begin position="1774"/>
        <end position="1783"/>
    </location>
</feature>
<feature type="active site" description="For cysteine protease nsP2 activity" evidence="9">
    <location>
        <position position="1012"/>
    </location>
</feature>
<feature type="active site" description="For cysteine protease nsP2 activity" evidence="9">
    <location>
        <position position="1081"/>
    </location>
</feature>
<feature type="binding site" evidence="10">
    <location>
        <begin position="720"/>
        <end position="727"/>
    </location>
    <ligand>
        <name>a ribonucleoside 5'-triphosphate</name>
        <dbReference type="ChEBI" id="CHEBI:61557"/>
    </ligand>
</feature>
<feature type="binding site" evidence="5">
    <location>
        <position position="1342"/>
    </location>
    <ligand>
        <name>ADP-D-ribose</name>
        <dbReference type="ChEBI" id="CHEBI:57967"/>
    </ligand>
</feature>
<feature type="binding site" evidence="6">
    <location>
        <position position="1356"/>
    </location>
    <ligand>
        <name>ADP-D-ribose</name>
        <dbReference type="ChEBI" id="CHEBI:57967"/>
    </ligand>
</feature>
<feature type="binding site" evidence="6">
    <location>
        <position position="1364"/>
    </location>
    <ligand>
        <name>ADP-D-ribose</name>
        <dbReference type="ChEBI" id="CHEBI:57967"/>
    </ligand>
</feature>
<feature type="binding site" evidence="5">
    <location>
        <position position="1444"/>
    </location>
    <ligand>
        <name>ADP-D-ribose</name>
        <dbReference type="ChEBI" id="CHEBI:57967"/>
    </ligand>
</feature>
<feature type="binding site" evidence="5">
    <location>
        <position position="1446"/>
    </location>
    <ligand>
        <name>ADP-D-ribose</name>
        <dbReference type="ChEBI" id="CHEBI:57967"/>
    </ligand>
</feature>
<feature type="binding site" evidence="2">
    <location>
        <position position="1594"/>
    </location>
    <ligand>
        <name>Zn(2+)</name>
        <dbReference type="ChEBI" id="CHEBI:29105"/>
    </ligand>
</feature>
<feature type="binding site" evidence="2">
    <location>
        <position position="1596"/>
    </location>
    <ligand>
        <name>Zn(2+)</name>
        <dbReference type="ChEBI" id="CHEBI:29105"/>
    </ligand>
</feature>
<feature type="binding site" evidence="2">
    <location>
        <position position="1619"/>
    </location>
    <ligand>
        <name>Zn(2+)</name>
        <dbReference type="ChEBI" id="CHEBI:29105"/>
    </ligand>
</feature>
<feature type="binding site" evidence="2">
    <location>
        <position position="1637"/>
    </location>
    <ligand>
        <name>Zn(2+)</name>
        <dbReference type="ChEBI" id="CHEBI:29105"/>
    </ligand>
</feature>
<feature type="site" description="Involved in the phosphoramide link with 7-methyl-GMP" evidence="4">
    <location>
        <position position="36"/>
    </location>
</feature>
<feature type="site" description="Cleavage; by protease nsP2" evidence="2">
    <location>
        <begin position="534"/>
        <end position="535"/>
    </location>
</feature>
<feature type="site" description="Cleavage; by protease nsP2" evidence="2">
    <location>
        <begin position="1332"/>
        <end position="1333"/>
    </location>
</feature>
<feature type="site" description="Cleavage; by protease nsP2" evidence="6">
    <location>
        <begin position="1856"/>
        <end position="1857"/>
    </location>
</feature>
<feature type="lipid moiety-binding region" description="S-palmitoyl cysteine; by host" evidence="6">
    <location>
        <position position="416"/>
    </location>
</feature>
<feature type="lipid moiety-binding region" description="S-palmitoyl cysteine; by host" evidence="6">
    <location>
        <position position="418"/>
    </location>
</feature>
<comment type="function">
    <molecule>Polyprotein P1234</molecule>
    <text evidence="6">Inactive precursor of the viral replicase, which is activated by cleavages carried out by the viral protease nsP2.</text>
</comment>
<comment type="function">
    <molecule>Polyprotein P123</molecule>
    <text evidence="2">The early replication complex formed by the polyprotein P123 and nsP4 synthesizes minus-strand RNAs (By similarity). As soon P123 is cleaved into mature proteins, the plus-strand RNAs synthesis begins (By similarity).</text>
</comment>
<comment type="function">
    <molecule>Polyprotein P123'</molecule>
    <text evidence="13">The early replication complex formed by the polyprotein P123' and nsP4 synthesizes minus-strand RNAs (Probable). Polyprotein P123' is a short-lived polyprotein that accumulates during early stage of infection (Probable). As soon P123' is cleaved into mature proteins, the plus-strand RNAs synthesis begins (Probable).</text>
</comment>
<comment type="function">
    <molecule>mRNA-capping enzyme nsP1</molecule>
    <text evidence="2 3 6 13">Cytoplasmic capping enzyme that catalyzes two virus-specific reactions: methyltransferase and nsP1 guanylyltransferase (By similarity). mRNA-capping is necessary since all viral RNAs are synthesized in the cytoplasm, and host capping enzymes are restricted to the nucleus (Probable). The enzymatic reaction involves a covalent link between 7-methyl-GMP and nsP1, whereas eukaryotic capping enzymes form a covalent complex only with GMP (By similarity). nsP1 capping consists in the following reactions: GTP is first methylated into 7-methyl-GMP and then is covalently linked to nsP1 to form the m7GMp-nsP1 complex from which 7-methyl-GMP complex is transferred to the mRNA to create the cap structure (By similarity). NsP1 is needed for the initiation of the minus-strand RNAs synthesis (By similarity). Probably serves as a membrane anchor for the replication complex composed of nsP1-nsP4 (By similarity). Palmitoylated nsP1 is remodeling host cell cytoskeleton, and induces filopodium-like structure formation at the surface of the host cell (By similarity).</text>
</comment>
<comment type="function">
    <molecule>Protease nsP2</molecule>
    <text evidence="2 3 6">Multifunctional protein whose N-terminus is part of the RNA polymerase complex and displays NTPase, RNA triphosphatase and helicase activities (By similarity). NTPase and RNA triphosphatase are involved in viral RNA capping and helicase keeps a check on the dsRNA replication intermediates (By similarity). The C-terminus harbors a protease that specifically cleaves the polyproteins and releases the mature proteins (By similarity). Required for the shutoff of minus-strand RNAs synthesis (By similarity). Specifically inhibits the host IFN response by promoting the nuclear export of host STAT1 (By similarity). Also inhibits host transcription by inducing rapid proteasome-dependent degradation of POLR2A, a catalytic subunit of the RNAPII complex (By similarity). The resulting inhibition of cellular protein synthesis serves to ensure maximal viral gene expression and to evade host immune response (By similarity).</text>
</comment>
<comment type="function">
    <molecule>Non-structural protein 3'</molecule>
    <text evidence="2 13">Seems to be essential for minus-strand RNAs and subgenomic 26S mRNAs synthesis (By similarity). Displays mono-ADP-ribosylhydrolase activity (Probable). ADP-ribosylation is a post-translational modification that controls various processes of the host cell and the virus probably needs to revert it for optimal viral replication (Probable). Binds proteins of FXR family and sequesters them into the viral RNA replication complexes thereby inhibiting the formation of host stress granules on viral mRNAs (Probable). The nsp3'-FXR complexes bind viral RNAs and probably orchestrate the assembly of viral replication complexes, thanks to the ability of FXR family members to self-assemble and bind DNA (Probable).</text>
</comment>
<comment type="function">
    <molecule>Non-structural protein 3</molecule>
    <text evidence="2 6">Seems to be essential for minus-strand RNAs and subgenomic 26S mRNAs synthesis (By similarity). Displays mono-ADP-ribosylhydrolase activity (By similarity). ADP-ribosylation is a post-translantional modification that controls various processes of the host cell and the virus probably needs to revert it for optimal viral replication (By similarity). Binds proteins of G3BP family and sequesters them into the viral RNA replication complexes thereby inhibiting the formation of host stress granules on viral mRNAs (By similarity). The nsp3-G3BP complexes bind viral RNAs and probably orchestrate the assembly of viral replication complexes, thanks to the ability of G3BP family members to self-assemble and bind DNA (By similarity).</text>
</comment>
<comment type="function">
    <molecule>RNA-directed RNA polymerase nsP4</molecule>
    <text evidence="2">RNA dependent RNA polymerase (By similarity). Replicates genomic and antigenomic RNA by recognizing replications specific signals. The early replication complex formed by the polyprotein P123 and nsP4 synthesizes minus-strand RNAs (By similarity). The late replication complex composed of fully processed nsP1-nsP4 is responsible for the production of genomic and subgenomic plus-strand RNAs (By similarity). The core catalytic domain of nsP4 also possesses terminal adenylyltransferase (TATase) activity that is probably involved in maintenance and repair of the poly(A) tail, an element required for replication of the viral genome (By similarity).</text>
</comment>
<comment type="catalytic activity">
    <reaction evidence="4">
        <text>GTP + S-adenosyl-L-methionine = N(7)-methyl-GTP + S-adenosyl-L-homocysteine</text>
        <dbReference type="Rhea" id="RHEA:46948"/>
        <dbReference type="ChEBI" id="CHEBI:37565"/>
        <dbReference type="ChEBI" id="CHEBI:57856"/>
        <dbReference type="ChEBI" id="CHEBI:59789"/>
        <dbReference type="ChEBI" id="CHEBI:87133"/>
    </reaction>
</comment>
<comment type="catalytic activity">
    <reaction evidence="2">
        <text>N(7)-methyl-GTP + L-histidyl-[protein] = N(tele)-(N(7)-methylguanosine 5'-phospho)-L-histidyl-[protein] + diphosphate</text>
        <dbReference type="Rhea" id="RHEA:54792"/>
        <dbReference type="Rhea" id="RHEA-COMP:9745"/>
        <dbReference type="Rhea" id="RHEA-COMP:13995"/>
        <dbReference type="ChEBI" id="CHEBI:29979"/>
        <dbReference type="ChEBI" id="CHEBI:33019"/>
        <dbReference type="ChEBI" id="CHEBI:87133"/>
        <dbReference type="ChEBI" id="CHEBI:138334"/>
    </reaction>
    <physiologicalReaction direction="left-to-right" evidence="2">
        <dbReference type="Rhea" id="RHEA:54793"/>
    </physiologicalReaction>
</comment>
<comment type="catalytic activity">
    <reaction evidence="4">
        <text>N(tele)-(N(7)-methylguanosine 5'-phospho)-L-histidyl-[protein] + a 5'-end diphospho-(purine-ribonucleoside) in mRNA + H(+) = a 5'-end (N(7)-methyl 5'-triphosphoguanosine)-(purine-ribonucleoside) in mRNA + L-histidyl-[protein]</text>
        <dbReference type="Rhea" id="RHEA:54800"/>
        <dbReference type="Rhea" id="RHEA-COMP:9745"/>
        <dbReference type="Rhea" id="RHEA-COMP:12925"/>
        <dbReference type="Rhea" id="RHEA-COMP:13929"/>
        <dbReference type="Rhea" id="RHEA-COMP:13995"/>
        <dbReference type="ChEBI" id="CHEBI:15378"/>
        <dbReference type="ChEBI" id="CHEBI:29979"/>
        <dbReference type="ChEBI" id="CHEBI:133968"/>
        <dbReference type="ChEBI" id="CHEBI:138276"/>
        <dbReference type="ChEBI" id="CHEBI:138334"/>
    </reaction>
</comment>
<comment type="catalytic activity">
    <reaction evidence="3">
        <text>a 5'-end triphospho-ribonucleoside in mRNA + H2O = a 5'-end diphospho-ribonucleoside in mRNA + phosphate + H(+)</text>
        <dbReference type="Rhea" id="RHEA:67004"/>
        <dbReference type="Rhea" id="RHEA-COMP:17164"/>
        <dbReference type="Rhea" id="RHEA-COMP:17165"/>
        <dbReference type="ChEBI" id="CHEBI:15377"/>
        <dbReference type="ChEBI" id="CHEBI:15378"/>
        <dbReference type="ChEBI" id="CHEBI:43474"/>
        <dbReference type="ChEBI" id="CHEBI:167616"/>
        <dbReference type="ChEBI" id="CHEBI:167618"/>
        <dbReference type="EC" id="3.6.1.74"/>
    </reaction>
    <physiologicalReaction direction="left-to-right" evidence="3">
        <dbReference type="Rhea" id="RHEA:67005"/>
    </physiologicalReaction>
</comment>
<comment type="catalytic activity">
    <reaction evidence="6">
        <text>a ribonucleoside 5'-triphosphate + H2O = a ribonucleoside 5'-diphosphate + phosphate + H(+)</text>
        <dbReference type="Rhea" id="RHEA:23680"/>
        <dbReference type="ChEBI" id="CHEBI:15377"/>
        <dbReference type="ChEBI" id="CHEBI:15378"/>
        <dbReference type="ChEBI" id="CHEBI:43474"/>
        <dbReference type="ChEBI" id="CHEBI:57930"/>
        <dbReference type="ChEBI" id="CHEBI:61557"/>
        <dbReference type="EC" id="3.6.1.15"/>
    </reaction>
</comment>
<comment type="catalytic activity">
    <reaction evidence="6">
        <text>ATP + H2O = ADP + phosphate + H(+)</text>
        <dbReference type="Rhea" id="RHEA:13065"/>
        <dbReference type="ChEBI" id="CHEBI:15377"/>
        <dbReference type="ChEBI" id="CHEBI:15378"/>
        <dbReference type="ChEBI" id="CHEBI:30616"/>
        <dbReference type="ChEBI" id="CHEBI:43474"/>
        <dbReference type="ChEBI" id="CHEBI:456216"/>
        <dbReference type="EC" id="3.6.4.13"/>
    </reaction>
</comment>
<comment type="catalytic activity">
    <reaction evidence="8">
        <text>RNA(n) + a ribonucleoside 5'-triphosphate = RNA(n+1) + diphosphate</text>
        <dbReference type="Rhea" id="RHEA:21248"/>
        <dbReference type="Rhea" id="RHEA-COMP:14527"/>
        <dbReference type="Rhea" id="RHEA-COMP:17342"/>
        <dbReference type="ChEBI" id="CHEBI:33019"/>
        <dbReference type="ChEBI" id="CHEBI:61557"/>
        <dbReference type="ChEBI" id="CHEBI:140395"/>
        <dbReference type="EC" id="2.7.7.48"/>
    </reaction>
</comment>
<comment type="catalytic activity">
    <reaction evidence="2">
        <text>RNA(n) + ATP = RNA(n)-3'-adenine ribonucleotide + diphosphate</text>
        <dbReference type="Rhea" id="RHEA:11332"/>
        <dbReference type="Rhea" id="RHEA-COMP:14527"/>
        <dbReference type="Rhea" id="RHEA-COMP:17347"/>
        <dbReference type="ChEBI" id="CHEBI:30616"/>
        <dbReference type="ChEBI" id="CHEBI:33019"/>
        <dbReference type="ChEBI" id="CHEBI:140395"/>
        <dbReference type="ChEBI" id="CHEBI:173115"/>
        <dbReference type="EC" id="2.7.7.19"/>
    </reaction>
</comment>
<comment type="catalytic activity">
    <reaction evidence="2">
        <text>4-O-(ADP-D-ribosyl)-L-aspartyl-[protein] + H2O = L-aspartyl-[protein] + ADP-D-ribose + H(+)</text>
        <dbReference type="Rhea" id="RHEA:54428"/>
        <dbReference type="Rhea" id="RHEA-COMP:9867"/>
        <dbReference type="Rhea" id="RHEA-COMP:13832"/>
        <dbReference type="ChEBI" id="CHEBI:15377"/>
        <dbReference type="ChEBI" id="CHEBI:15378"/>
        <dbReference type="ChEBI" id="CHEBI:29961"/>
        <dbReference type="ChEBI" id="CHEBI:57967"/>
        <dbReference type="ChEBI" id="CHEBI:138102"/>
    </reaction>
    <physiologicalReaction direction="left-to-right" evidence="2">
        <dbReference type="Rhea" id="RHEA:54429"/>
    </physiologicalReaction>
</comment>
<comment type="catalytic activity">
    <reaction evidence="2">
        <text>5-O-(ADP-D-ribosyl)-L-glutamyl-[protein] + H2O = L-glutamyl-[protein] + ADP-D-ribose + H(+)</text>
        <dbReference type="Rhea" id="RHEA:58248"/>
        <dbReference type="Rhea" id="RHEA-COMP:10208"/>
        <dbReference type="Rhea" id="RHEA-COMP:15089"/>
        <dbReference type="ChEBI" id="CHEBI:15377"/>
        <dbReference type="ChEBI" id="CHEBI:15378"/>
        <dbReference type="ChEBI" id="CHEBI:29973"/>
        <dbReference type="ChEBI" id="CHEBI:57967"/>
        <dbReference type="ChEBI" id="CHEBI:142540"/>
    </reaction>
    <physiologicalReaction direction="left-to-right" evidence="2">
        <dbReference type="Rhea" id="RHEA:58249"/>
    </physiologicalReaction>
</comment>
<comment type="catalytic activity">
    <reaction evidence="6">
        <text>ADP-alpha-D-ribose 1''-phosphate + H2O = ADP-D-ribose + phosphate</text>
        <dbReference type="Rhea" id="RHEA:25029"/>
        <dbReference type="ChEBI" id="CHEBI:15377"/>
        <dbReference type="ChEBI" id="CHEBI:43474"/>
        <dbReference type="ChEBI" id="CHEBI:57967"/>
        <dbReference type="ChEBI" id="CHEBI:58753"/>
        <dbReference type="EC" id="3.1.3.84"/>
    </reaction>
    <physiologicalReaction direction="left-to-right" evidence="6">
        <dbReference type="Rhea" id="RHEA:25030"/>
    </physiologicalReaction>
</comment>
<comment type="cofactor">
    <cofactor evidence="2">
        <name>Mg(2+)</name>
        <dbReference type="ChEBI" id="CHEBI:18420"/>
    </cofactor>
    <cofactor evidence="2">
        <name>Mn(2+)</name>
        <dbReference type="ChEBI" id="CHEBI:29035"/>
    </cofactor>
    <text evidence="2">For nsP4 adenylyltransferase activity; Mn(2+) supports catalysis at 60% of the levels observed with Mg(2+).</text>
</comment>
<comment type="cofactor">
    <cofactor evidence="2">
        <name>Mg(2+)</name>
        <dbReference type="ChEBI" id="CHEBI:18420"/>
    </cofactor>
    <text evidence="2">For nsP4 RNA-directed RNA polymerase activity.</text>
</comment>
<comment type="cofactor">
    <cofactor evidence="4">
        <name>Mg(2+)</name>
        <dbReference type="ChEBI" id="CHEBI:18420"/>
    </cofactor>
    <text evidence="4">For nsP1 guanylylation.</text>
</comment>
<comment type="cofactor">
    <cofactor>
        <name>Mg(2+)</name>
        <dbReference type="ChEBI" id="CHEBI:18420"/>
    </cofactor>
    <text evidence="6">For nsP2 RNA triphosphatase activity.</text>
</comment>
<comment type="cofactor">
    <cofactor>
        <name>Mg(2+)</name>
        <dbReference type="ChEBI" id="CHEBI:18420"/>
    </cofactor>
    <text evidence="6">For nsP2 NTPase activity.</text>
</comment>
<comment type="subunit">
    <molecule>mRNA-capping enzyme nsP1</molecule>
    <text evidence="2 4">Interacts with non-structural protein 3 (By similarity). Interacts with RNA-directed RNA polymerase nsP4 (By similarity). Interacts with protease nsP2 (By similarity). interacts with itself (By similarity).</text>
</comment>
<comment type="subunit">
    <molecule>Non-structural protein 3</molecule>
    <text evidence="2 4">Interacts with mRNA-capping enzyme nsP1 (By similarity). Interacts with host DDX1 (By similarity). Interacts with host DDX3 (By similarity). Interacts (via C-terminus) with host G3BP1; this interaction inhibits the formation of host stress granules on viral mRNAs and the nsp3-G3BP1 complexes bind viral RNAs and probably orchestrate the assembly of viral replication complexes (By similarity). Interacts (via C-terminus) with host G3BP2; this interaction inhibits the formation of host stress granules on viral mRNAs and the nsp3-G3BP2 complexes bind viral RNAs and probably orchestrate the assembly of viral replication complexes (By similarity).</text>
</comment>
<comment type="subunit">
    <molecule>RNA-directed RNA polymerase nsP4</molecule>
    <text evidence="2 4">Interacts with mRNA-capping enzyme nsP1 (By similarity). Interacts with protease nsP2 (By similarity). interacts with itself (By similarity).</text>
</comment>
<comment type="subunit">
    <molecule>Protease nsP2</molecule>
    <text evidence="2 4">Interacts with RNA-directed RNA polymerase nsP4 (By similarity). Interacts with mRNA-capping enzyme nsP1 (By similarity). Interacts with KPNA1/karyopherin-alpha1; this interaction probably allows the active transport of protease nsP2 into the host nucleus (By similarity).</text>
</comment>
<comment type="subcellular location">
    <molecule>Polyprotein P1234</molecule>
    <subcellularLocation>
        <location evidence="13">Host cytoplasmic vesicle membrane</location>
        <topology evidence="13">Peripheral membrane protein</topology>
    </subcellularLocation>
    <text evidence="13">Part of cytoplasmic vesicles, which are probably formed at the plasma membrane and internalized leading to late endosomal/lysosomal spherules containing the replication complex.</text>
</comment>
<comment type="subcellular location">
    <molecule>Polyprotein P123'</molecule>
    <subcellularLocation>
        <location evidence="13">Host cytoplasmic vesicle membrane</location>
        <topology evidence="13">Peripheral membrane protein</topology>
    </subcellularLocation>
    <text evidence="13">Part of cytoplasmic vesicles, which are probably formed at the plasma membrane and internalized leading to late endosomal/lysosomal spherules containing the replication complex.</text>
</comment>
<comment type="subcellular location">
    <molecule>Polyprotein P123</molecule>
    <subcellularLocation>
        <location evidence="13">Host cytoplasmic vesicle membrane</location>
        <topology evidence="13">Peripheral membrane protein</topology>
    </subcellularLocation>
    <text evidence="13">Part of cytoplasmic vesicles, which are probably formed at the plasma membrane and internalized leading to late endosomal/lysosomal spherules containing the replication complex.</text>
</comment>
<comment type="subcellular location">
    <molecule>mRNA-capping enzyme nsP1</molecule>
    <subcellularLocation>
        <location evidence="3">Host cytoplasmic vesicle membrane</location>
        <topology evidence="3">Lipid-anchor</topology>
    </subcellularLocation>
    <subcellularLocation>
        <location evidence="3">Host cell membrane</location>
        <topology evidence="3">Lipid-anchor</topology>
        <orientation evidence="3">Cytoplasmic side</orientation>
    </subcellularLocation>
    <subcellularLocation>
        <location evidence="3">Host cell projection</location>
        <location evidence="3">Host filopodium</location>
    </subcellularLocation>
    <text evidence="3">In the late phase of infection, the polyprotein is quickly cleaved before localization to cellular membranes. Then a fraction of nsP1 localizes to the inner surface of the plasma membrane and its filopodial extensions. Only the palmitoylated nsP1 localizes to the host filopodia (By similarity). NsP1 is also part of cytoplasmic vesicles, which are probably formed at the plasma membrane and internalized leading to late endosomal/lysosomal spherules containing the replication complex (By similarity).</text>
</comment>
<comment type="subcellular location">
    <molecule>Protease nsP2</molecule>
    <subcellularLocation>
        <location evidence="3">Host cytoplasmic vesicle membrane</location>
        <topology evidence="3">Peripheral membrane protein</topology>
    </subcellularLocation>
    <subcellularLocation>
        <location evidence="4">Host nucleus</location>
    </subcellularLocation>
    <subcellularLocation>
        <location evidence="4">Host cytoplasm</location>
    </subcellularLocation>
    <text evidence="3 4">In the late phase of infection, the polyprotein is quickly cleaved before localization to cellular membranes. Then approximately half of nsP2 is found in the nucleus (By similarity). Shuttles between cytoplasm and nucleus (By similarity). NsP2 is also part of cytoplasmic vesicles, which are probably formed at the plasma membrane and internalized leading to late endosomal/lysosomal spherules containing the replication complex (By similarity).</text>
</comment>
<comment type="subcellular location">
    <molecule>Non-structural protein 3</molecule>
    <subcellularLocation>
        <location evidence="2">Host cytoplasmic vesicle membrane</location>
        <topology evidence="13">Peripheral membrane protein</topology>
    </subcellularLocation>
    <text evidence="2">In the late phase of infection, the polyprotein is quickly cleaved before localization to cellular membranes. Then nsP3 and nsP3' form aggregates in cytoplasm (By similarity). NsP3 is also part of cytoplasmic vesicles, which are probably formed at the plasma membrane and internalized leading to late endosomal/lysosomal spherules containing the replication complex (By similarity).</text>
</comment>
<comment type="subcellular location">
    <molecule>Non-structural protein 3'</molecule>
    <subcellularLocation>
        <location evidence="2">Host cytoplasmic vesicle membrane</location>
        <topology evidence="13">Peripheral membrane protein</topology>
    </subcellularLocation>
    <text evidence="2">In the late phase of infection, the polyprotein is quickly cleaved before localization to cellular membranes. Then nsP3 and nsP3' form aggregates in cytoplasm (By similarity). NsP3' is also part of cytoplasmic vesicles, which are probably formed at the plasma membrane and internalized leading to late endosomal/lysosomal spherules containing the replication complex (By similarity).</text>
</comment>
<comment type="subcellular location">
    <molecule>RNA-directed RNA polymerase nsP4</molecule>
    <subcellularLocation>
        <location>Host cytoplasmic vesicle membrane</location>
        <topology evidence="2">Peripheral membrane protein</topology>
    </subcellularLocation>
    <text evidence="3">NsP4 is part of cytoplasmic vesicles, which are probably formed at the plasma membrane and internalized leading to late endosomal/lysosomal spherules containing the replication complex.</text>
</comment>
<comment type="domain">
    <molecule>Protease nsP2</molecule>
    <text evidence="4 6">The N-terminus exhibits NTPase and RNA triphosphatase activities and is proposed to have helicase activity, whereas the C-terminus possesses protease activity (By similarity). Contains a nuclear localization signal and a nuclear export signal, these two motifs are probably involved in the shuttling between the cytoplasm and the nucleus of nsP2 (By similarity). The C-terminus is required for promoting the export of host STAT1 (By similarity).</text>
</comment>
<comment type="domain">
    <molecule>Non-structural protein 3</molecule>
    <text evidence="2 3">In the N-terminus, the macro domain displays a mono-ADP-ribosylhydrolase activity (By similarity). The central part has a zinc-binding function (By similarity). The C-terminus contains two FGDF motifs necessary and sufficient for formation of the nsP3/G3BP1 complex (By similarity).</text>
</comment>
<comment type="domain">
    <molecule>Non-structural protein 3'</molecule>
    <text evidence="2 3">In the N-terminus, the macro domain displays a mono-ADP-ribosylhydrolase activity (By similarity). The central part has a zinc-binding function (By similarity). The C-terminus contains two FGDF motifs necessary and sufficient for formation of the nsP3'/G3BP1 complex (By similarity).</text>
</comment>
<comment type="PTM">
    <molecule>Polyprotein P1234</molecule>
    <text evidence="2">Specific enzymatic cleavages in vivo yield mature proteins (By similarity). The processing of the polyprotein is temporally regulated (By similarity). In early stages (1.7 hpi), P1234 is first cleaved in trans through its nsP2 protease activity, releasing P123' and nsP4, which associate to form the early replication complex (By similarity). At the same time, P1234 is also cut at the nsP1/nsP2 site early in infection but with lower efficiency (By similarity). After replication of the viral minus-strand RNAs (4 hpi), the polyproteins are cut at the nsP1/nsP2 and nsP2/nsP3 sites very efficiently, preventing accumulation of P123' and P1234 and allowing the formation of the late replication complex (By similarity). NsP3'/nsP4 site is not cleaved anymore and P34 is produced rather than nsP4 (By similarity).</text>
</comment>
<comment type="PTM">
    <molecule>Polyprotein P123</molecule>
    <text evidence="2">Specific enzymatic cleavages in vivo yield mature proteins (By similarity). The processing of the polyprotein is temporally regulated (By similarity). In early stages (1.7 hpi), P123 is cleaved at the nsP1/nsP2 site with low efficiency (By similarity). After replication of the viral minus-strand RNAs (4 hpi), the polyproteins are cut at the nsP1/nsP2 and nsP2/nsP3 sites very efficiently, preventing accumulation of P123 and allowing the formation of the late replication complex (By similarity).</text>
</comment>
<comment type="PTM">
    <molecule>Polyprotein P123'</molecule>
    <text evidence="2">Specific enzymatic cleavages in vivo yield mature proteins (By similarity). The processing of the polyprotein is temporally regulated (By similarity). In early stages (1.7 hpi), P123' is cleaved at the nsP1/nsP2 site with low efficiency (By similarity). After replication of the viral minus-strand RNAs (4 hpi), the polyproteins are cut at the nsP1/nsP2 and nsP2/nsP3 sites very efficiently, preventing accumulation of P123' and allowing the formation of the late replication complex (By similarity).</text>
</comment>
<comment type="PTM">
    <molecule>mRNA-capping enzyme nsP1</molecule>
    <text evidence="6">Palmitoylated by host palmitoyltransferases ZDHHC2 and ZDHHC19.</text>
</comment>
<comment type="PTM">
    <molecule>Non-structural protein 3</molecule>
    <text evidence="3">Phosphorylated by host on serines and threonines.</text>
</comment>
<comment type="PTM">
    <molecule>Non-structural protein 3'</molecule>
    <text evidence="3">Phosphorylated by host on serines and threonines.</text>
</comment>
<comment type="PTM">
    <molecule>RNA-directed RNA polymerase nsP4</molecule>
    <text evidence="2">Ubiquitinated; targets the protein for rapid degradation via the ubiquitin system (By similarity). Nsp4 is present in extremely low quantities due to low frequency of translation through the amber stop-codon and the degradation by the ubiquitin pathway (By similarity).</text>
</comment>
<comment type="miscellaneous">
    <text evidence="2">Viral replication produces dsRNA in the late phase of infection, resulting in a strong activation of host EIF2AK2/PKR, leading to almost complete phosphorylation of EIF2A (By similarity). This inactivates completely cellular translation initiation, resulting shutoff of host proteins synthesis (By similarity). However, phosphorylation of EIF2A is probably not the only mechanism responsible for the host translation shutoff (By similarity). The viral translation can still occur normally because it relies on a hairpin structure in the coding region of sgRNA and is EIF2A-, EIF2D-, EIF4G- EIF4A-independent (By similarity).</text>
</comment>
<comment type="miscellaneous">
    <text evidence="1 2 13">The genome codes for P123, but readthrough of a terminator codon UGA occurs between the codons for Ser-1849 and Leu-1851 giving rise to P1234 (Probable). P1234 is cleaved quickly by nsP2 into P123' and nsP4 (By similarity). Further processing of p123' gives nsP1, nsP2 and nsP3' which is 6 amino acids longer than nsP3 since the cleavage site is after the readthrough (By similarity). This unusual molecular mechanism ensures that few nsP4 are produced compared to other non-structural proteins (By similarity). Mutant viruses with no alternative termination site grow significantly slower than wild-type virus (By similarity). The opal termination codon is frequently mutated to a sense codon on passage in cell culture (By similarity). The presence of the opal codon may be a requirement for viral maintenance in both vertebrate and invertebrate hosts and a selective advantage may be conferred in cell culture for the sense codon (By similarity).</text>
</comment>
<keyword id="KW-0067">ATP-binding</keyword>
<keyword id="KW-1262">Eukaryotic host gene expression shutoff by virus</keyword>
<keyword id="KW-1191">Eukaryotic host transcription shutoff by virus</keyword>
<keyword id="KW-0342">GTP-binding</keyword>
<keyword id="KW-0347">Helicase</keyword>
<keyword id="KW-1032">Host cell membrane</keyword>
<keyword id="KW-1034">Host cell projection</keyword>
<keyword id="KW-1035">Host cytoplasm</keyword>
<keyword id="KW-1036">Host cytoplasmic vesicle</keyword>
<keyword id="KW-1190">Host gene expression shutoff by virus</keyword>
<keyword id="KW-1043">Host membrane</keyword>
<keyword id="KW-1048">Host nucleus</keyword>
<keyword id="KW-0945">Host-virus interaction</keyword>
<keyword id="KW-0378">Hydrolase</keyword>
<keyword id="KW-1104">Inhibition of host RNA polymerase II by virus</keyword>
<keyword id="KW-0449">Lipoprotein</keyword>
<keyword id="KW-0472">Membrane</keyword>
<keyword id="KW-0479">Metal-binding</keyword>
<keyword id="KW-0489">Methyltransferase</keyword>
<keyword id="KW-0506">mRNA capping</keyword>
<keyword id="KW-0507">mRNA processing</keyword>
<keyword id="KW-0511">Multifunctional enzyme</keyword>
<keyword id="KW-0547">Nucleotide-binding</keyword>
<keyword id="KW-0548">Nucleotidyltransferase</keyword>
<keyword id="KW-0564">Palmitate</keyword>
<keyword id="KW-0645">Protease</keyword>
<keyword id="KW-1159">RNA suppression of termination</keyword>
<keyword id="KW-0694">RNA-binding</keyword>
<keyword id="KW-0696">RNA-directed RNA polymerase</keyword>
<keyword id="KW-0949">S-adenosyl-L-methionine</keyword>
<keyword id="KW-0788">Thiol protease</keyword>
<keyword id="KW-0808">Transferase</keyword>
<keyword id="KW-0832">Ubl conjugation</keyword>
<keyword id="KW-0693">Viral RNA replication</keyword>
<keyword id="KW-0862">Zinc</keyword>
<organismHost>
    <name type="scientific">Aedes vexans</name>
    <name type="common">Inland floodwater mosquito</name>
    <name type="synonym">Culex vexans</name>
    <dbReference type="NCBI Taxonomy" id="7163"/>
</organismHost>
<organismHost>
    <name type="scientific">Culex tritaeniorhynchus</name>
    <name type="common">Mosquito</name>
    <dbReference type="NCBI Taxonomy" id="7178"/>
</organismHost>
<organismHost>
    <name type="scientific">Equus caballus</name>
    <name type="common">Horse</name>
    <dbReference type="NCBI Taxonomy" id="9796"/>
</organismHost>
<organismHost>
    <name type="scientific">Homo sapiens</name>
    <name type="common">Human</name>
    <dbReference type="NCBI Taxonomy" id="9606"/>
</organismHost>
<organismHost>
    <name type="scientific">Sus scrofa</name>
    <name type="common">Pig</name>
    <dbReference type="NCBI Taxonomy" id="9823"/>
</organismHost>
<organismHost>
    <name type="scientific">Vulpes vulpes</name>
    <name type="common">Red fox</name>
    <dbReference type="NCBI Taxonomy" id="9627"/>
</organismHost>
<sequence length="2467" mass="275214">MKVTVDVEADSPFLKALQKAFPAFEVESQQVTPNDHANARAFSHLATKLIEQEVPTGVTILDVGSAPARRLMSDHTYHCICPMKSAEDPERLANYARKLAKASGTVLDKNVSGKITDLQDVMATPDLESPTFCLHTDETCRTRAEVAVYQDVYAVHAPTSLYHQAIKGVRTAYWIGFDTTPFMFEALAGAYPAYSTNWADEQVLQARNIGLCATGLSEGRRGKLSIMRKKCLRPSDRVMFSVGSTLYTESRKLLRSWHLPSVFHLKGKNSFTCRCDTVVSCEGYVVKKITISPGIYGKTVDYAVTHHAEGFLVCKITDTVRGERVSFPVCTYVPATICDQMTGILATDVTPEDAQKLLVGLNQRIVVNGRTQRNTNTMKNYLLPVVAQAFSKWAREARADMEDEKPLGTRERTLTCCCLWAFKSHKIHTMYKRPETQTIVKVPSTFDSFVIPSLWSSSLSMGIRQRIKLLLSARMAQGLPYSGDRTEARAAEEEEKEAQEAELTRAALPPLVSGSCADDIAQVDVEELTFRAGAGVVETPRNALKVTPQAHDHLIGSYLILSPQTVLKSEKLAPIHPLAEQVTVMTHSGRSGRYPVDKYDGRVLIPTGAAIPVSEFQALSESATMVYNEREFINRKLHHIALYGPALNTDEESYEKVRAERAETEYVFDVDKKACIKKEEASGLVLTGDLINPPFHEFAYEGLKIRPAAPYHTTIIGVFGVPGSGKSAIIKNMVTTRDLVASGKKENCQEIMNDVKRQRGLDVTARTVDSILLNGCKRGVENLYVDEAFACHSGTLLALIALVRPSGKVVLCGDPKQCGFFNLMQLKVHYNHNICTRVLHKSISRRCTLPVTAIVSTLHYQGKMRTTNRCNTPIQIDTTGSSKPASGDIVLTCFRGWVKQLQIDYRGHEVMTAAASQGLTRKGVYAVRQKVNENPLYSPLSEHVNVLLTRTENRLVWKTLSGDPWIKVLTNVPRGDFSATLEEWQEEHDGIMRVLNERPAEVDPFQNKAKVCWAKCLVQVLETAGIRMTADEWNTILAFREDRAYSPEVALNEICTRYYGVDLDSGLFSAQSVSLFYENNHWDNRPGGRMYGFNHEVARKYAARFPFLRGNMNSGLQLNVPERKLQPFSAECNIVPSNRRLPHALVTSYQQCRGERVEWLLKKIPGHQMLLVSEYNLAIPHKRVFWIAPPRVSGADRTYDLDLGLPMDAGRYDLVFVNIHTEYRQHHYQQCVDHSMRLQMLGGDSLHLLRPGGSLLMRAYGYADRVSEMVVTALARKFSAFRVLRPACVTSNTEVFLLFSNFDNGRRAVTLHQANQKLSSMYACNGLHTAGCAPSYRVRRADISGHGEEAVVNAANAKGTVSDGVCRAVAKKWPSSFKGAATPVGTAKMIRADGMTVIHAVGPNFSTVTEAEGDRELAAAYRAVASIISTNNIKSVAVPLLSTGTFSGGKDRVMQSLNHLFTALDATDADVVIYCRDKNWEKKIQEAIDRRTAIELVSEDVTLETDLVRVHPDSCLVGRNGYSATDGKLYSYLEGTRFHQTAVDMAEISTLWPRLQDANEQICLYALGETMDSIRTKCPVEDADSSTPPKTVPCLCRYAMTAERVARLRMNNTKNIIVCSSFPLPKYRIEGVQKVKCDRVLIFDQTVPSLVSPRKYIQQPPEQLDNVSLTSTTSTGSAWSLPSETTYETMEVVAEVHTEPPIPPPRRRRAAVAQLRQDLEVTEEIEPYVIQQAEIMVMERVATTDIRAIPVPARRAITMPVPAPRVRKVATEPPSEPEAPIPAPRKRRTTSTTPPHNPGDFVPRVPVELPWEPEDLDIQFGDLEPRRRNTRDWDVSTGIQFGDIDFNQSXLGRAGAYIFSSDTGPGHLQQRSVRQHELPCETLYAHEDERIYPPAFDGEKEKILQAKMQMAPTEANKSRYQSRKVENMKALIVERLREGAKLYLHEQTDKVPTYTSKYPRPVYSPSVDDSLSNPEVAVAACNSFLEENYPTVANYQITDEYDAYLDLVDGSESCLDRATFCPAKLRCYPKHHAYHQPQIRSAVPSPFQNTLQNVLAAATKRNCNVTQMRELPTMDSAVFNVESFKKYACTGEYWQEFKDNPIRITTENITTYVAKLKGPKAAALFAKTHNLVPLQEVPMDRFVMDMKRDVKVTPGTKHTEERPKVQVIQAAEPLATAYLCGIHRELVRRLKAVLTPNIHTLFDMSAEDFDAIIAAHFQPGDAVLETDIASFDKSQDDSLALTALMLLEDLGVDQELLDLIEAAFGEITSVHLPTGTRFKFGAMMKSGMFLTLFINTLLNIVIACRVLRDKLSSSACAAFIGDDNIVHGVRSDPLMAERCASWVNMEVKIIDATMCEKPPYFCGGFILYDSVAGTACRVADPLKRLFKLGKPLPADDNQDEDRRRALKDETVKWSRIGLREELDVALSSRYQVSGVGNITRAMSTLSKNLKSFRKIRGPIIHLYGGPK</sequence>
<reference key="1">
    <citation type="journal article" date="2000" name="J. Gen. Virol.">
        <title>Genome structure of Sagiyama virus and its relatedness to other alphaviruses.</title>
        <authorList>
            <person name="Shirako Y."/>
            <person name="Yamaguchi Y."/>
        </authorList>
    </citation>
    <scope>NUCLEOTIDE SEQUENCE [GENOMIC RNA]</scope>
</reference>
<proteinExistence type="inferred from homology"/>
<protein>
    <recommendedName>
        <fullName>Polyprotein P1234</fullName>
        <shortName>P1234</shortName>
    </recommendedName>
    <alternativeName>
        <fullName>Non-structural polyprotein</fullName>
    </alternativeName>
    <component>
        <recommendedName>
            <fullName>Polyprotein P123'</fullName>
            <shortName>P123'</shortName>
        </recommendedName>
    </component>
    <component>
        <recommendedName>
            <fullName>Polyprotein P123</fullName>
            <shortName>P123</shortName>
        </recommendedName>
    </component>
    <component>
        <recommendedName>
            <fullName>mRNA-capping enzyme nsP1</fullName>
            <ecNumber evidence="4">2.1.1.-</ecNumber>
            <ecNumber evidence="2">2.7.7.-</ecNumber>
        </recommendedName>
        <alternativeName>
            <fullName>Non-structural protein 1</fullName>
        </alternativeName>
    </component>
    <component>
        <recommendedName>
            <fullName>Protease nsP2</fullName>
            <ecNumber evidence="6">3.4.22.-</ecNumber>
            <ecNumber evidence="6">3.6.1.15</ecNumber>
            <ecNumber evidence="3">3.6.1.74</ecNumber>
            <ecNumber evidence="6">3.6.4.13</ecNumber>
        </recommendedName>
        <alternativeName>
            <fullName>Non-structural protein 2</fullName>
            <shortName>nsP2</shortName>
        </alternativeName>
    </component>
    <component>
        <recommendedName>
            <fullName>Non-structural protein 3'</fullName>
            <shortName>nsP3'</shortName>
            <ecNumber evidence="13">3.1.3.84</ecNumber>
        </recommendedName>
    </component>
    <component>
        <recommendedName>
            <fullName>Non-structural protein 3</fullName>
            <shortName>nsP3</shortName>
            <ecNumber evidence="6">3.1.3.84</ecNumber>
        </recommendedName>
    </component>
    <component>
        <recommendedName>
            <fullName>RNA-directed RNA polymerase nsP4</fullName>
            <ecNumber evidence="2">2.7.7.19</ecNumber>
            <ecNumber evidence="8">2.7.7.48</ecNumber>
        </recommendedName>
        <alternativeName>
            <fullName>Non-structural protein 4</fullName>
            <shortName>nsP4</shortName>
        </alternativeName>
    </component>
</protein>
<name>POLN_SAGV</name>
<evidence type="ECO:0000250" key="1">
    <source>
        <dbReference type="UniProtKB" id="O90368"/>
    </source>
</evidence>
<evidence type="ECO:0000250" key="2">
    <source>
        <dbReference type="UniProtKB" id="P03317"/>
    </source>
</evidence>
<evidence type="ECO:0000250" key="3">
    <source>
        <dbReference type="UniProtKB" id="P08411"/>
    </source>
</evidence>
<evidence type="ECO:0000250" key="4">
    <source>
        <dbReference type="UniProtKB" id="P27282"/>
    </source>
</evidence>
<evidence type="ECO:0000250" key="5">
    <source>
        <dbReference type="UniProtKB" id="P36328"/>
    </source>
</evidence>
<evidence type="ECO:0000250" key="6">
    <source>
        <dbReference type="UniProtKB" id="Q8JUX6"/>
    </source>
</evidence>
<evidence type="ECO:0000255" key="7">
    <source>
        <dbReference type="PROSITE-ProRule" id="PRU00490"/>
    </source>
</evidence>
<evidence type="ECO:0000255" key="8">
    <source>
        <dbReference type="PROSITE-ProRule" id="PRU00539"/>
    </source>
</evidence>
<evidence type="ECO:0000255" key="9">
    <source>
        <dbReference type="PROSITE-ProRule" id="PRU00853"/>
    </source>
</evidence>
<evidence type="ECO:0000255" key="10">
    <source>
        <dbReference type="PROSITE-ProRule" id="PRU00990"/>
    </source>
</evidence>
<evidence type="ECO:0000255" key="11">
    <source>
        <dbReference type="PROSITE-ProRule" id="PRU01079"/>
    </source>
</evidence>
<evidence type="ECO:0000256" key="12">
    <source>
        <dbReference type="SAM" id="MobiDB-lite"/>
    </source>
</evidence>
<evidence type="ECO:0000305" key="13"/>
<dbReference type="EC" id="2.1.1.-" evidence="4"/>
<dbReference type="EC" id="2.7.7.-" evidence="2"/>
<dbReference type="EC" id="3.4.22.-" evidence="6"/>
<dbReference type="EC" id="3.6.1.15" evidence="6"/>
<dbReference type="EC" id="3.6.1.74" evidence="3"/>
<dbReference type="EC" id="3.6.4.13" evidence="6"/>
<dbReference type="EC" id="3.1.3.84" evidence="13 6"/>
<dbReference type="EC" id="2.7.7.19" evidence="2"/>
<dbReference type="EC" id="2.7.7.48" evidence="8"/>
<dbReference type="EMBL" id="AB032553">
    <property type="protein sequence ID" value="BAA92845.1"/>
    <property type="molecule type" value="Genomic_RNA"/>
</dbReference>
<dbReference type="EMBL" id="AB032553">
    <property type="protein sequence ID" value="BAA92846.1"/>
    <property type="status" value="ALT_SEQ"/>
    <property type="molecule type" value="Genomic_RNA"/>
</dbReference>
<dbReference type="IntAct" id="Q9JGL0">
    <property type="interactions" value="2"/>
</dbReference>
<dbReference type="MEROPS" id="C09.001"/>
<dbReference type="Proteomes" id="UP000007138">
    <property type="component" value="Genome"/>
</dbReference>
<dbReference type="GO" id="GO:0044162">
    <property type="term" value="C:host cell cytoplasmic vesicle membrane"/>
    <property type="evidence" value="ECO:0007669"/>
    <property type="project" value="UniProtKB-SubCell"/>
</dbReference>
<dbReference type="GO" id="GO:0044176">
    <property type="term" value="C:host cell filopodium"/>
    <property type="evidence" value="ECO:0007669"/>
    <property type="project" value="UniProtKB-SubCell"/>
</dbReference>
<dbReference type="GO" id="GO:0042025">
    <property type="term" value="C:host cell nucleus"/>
    <property type="evidence" value="ECO:0007669"/>
    <property type="project" value="UniProtKB-SubCell"/>
</dbReference>
<dbReference type="GO" id="GO:0020002">
    <property type="term" value="C:host cell plasma membrane"/>
    <property type="evidence" value="ECO:0007669"/>
    <property type="project" value="UniProtKB-SubCell"/>
</dbReference>
<dbReference type="GO" id="GO:0016020">
    <property type="term" value="C:membrane"/>
    <property type="evidence" value="ECO:0007669"/>
    <property type="project" value="UniProtKB-KW"/>
</dbReference>
<dbReference type="GO" id="GO:0005524">
    <property type="term" value="F:ATP binding"/>
    <property type="evidence" value="ECO:0007669"/>
    <property type="project" value="UniProtKB-KW"/>
</dbReference>
<dbReference type="GO" id="GO:0016887">
    <property type="term" value="F:ATP hydrolysis activity"/>
    <property type="evidence" value="ECO:0007669"/>
    <property type="project" value="RHEA"/>
</dbReference>
<dbReference type="GO" id="GO:0008234">
    <property type="term" value="F:cysteine-type peptidase activity"/>
    <property type="evidence" value="ECO:0007669"/>
    <property type="project" value="UniProtKB-KW"/>
</dbReference>
<dbReference type="GO" id="GO:0005525">
    <property type="term" value="F:GTP binding"/>
    <property type="evidence" value="ECO:0007669"/>
    <property type="project" value="UniProtKB-KW"/>
</dbReference>
<dbReference type="GO" id="GO:0046872">
    <property type="term" value="F:metal ion binding"/>
    <property type="evidence" value="ECO:0007669"/>
    <property type="project" value="UniProtKB-KW"/>
</dbReference>
<dbReference type="GO" id="GO:0140818">
    <property type="term" value="F:mRNA 5'-triphosphate monophosphatase activity"/>
    <property type="evidence" value="ECO:0007669"/>
    <property type="project" value="RHEA"/>
</dbReference>
<dbReference type="GO" id="GO:0008174">
    <property type="term" value="F:mRNA methyltransferase activity"/>
    <property type="evidence" value="ECO:0007669"/>
    <property type="project" value="InterPro"/>
</dbReference>
<dbReference type="GO" id="GO:1990817">
    <property type="term" value="F:poly(A) RNA polymerase activity"/>
    <property type="evidence" value="ECO:0007669"/>
    <property type="project" value="UniProtKB-EC"/>
</dbReference>
<dbReference type="GO" id="GO:0004651">
    <property type="term" value="F:polynucleotide 5'-phosphatase activity"/>
    <property type="evidence" value="ECO:0007669"/>
    <property type="project" value="UniProtKB-EC"/>
</dbReference>
<dbReference type="GO" id="GO:0003723">
    <property type="term" value="F:RNA binding"/>
    <property type="evidence" value="ECO:0007669"/>
    <property type="project" value="UniProtKB-KW"/>
</dbReference>
<dbReference type="GO" id="GO:0003724">
    <property type="term" value="F:RNA helicase activity"/>
    <property type="evidence" value="ECO:0007669"/>
    <property type="project" value="UniProtKB-EC"/>
</dbReference>
<dbReference type="GO" id="GO:0003968">
    <property type="term" value="F:RNA-directed RNA polymerase activity"/>
    <property type="evidence" value="ECO:0007669"/>
    <property type="project" value="UniProtKB-KW"/>
</dbReference>
<dbReference type="GO" id="GO:0006370">
    <property type="term" value="P:7-methylguanosine mRNA capping"/>
    <property type="evidence" value="ECO:0007669"/>
    <property type="project" value="UniProtKB-KW"/>
</dbReference>
<dbReference type="GO" id="GO:0006351">
    <property type="term" value="P:DNA-templated transcription"/>
    <property type="evidence" value="ECO:0007669"/>
    <property type="project" value="InterPro"/>
</dbReference>
<dbReference type="GO" id="GO:0032259">
    <property type="term" value="P:methylation"/>
    <property type="evidence" value="ECO:0007669"/>
    <property type="project" value="UniProtKB-KW"/>
</dbReference>
<dbReference type="GO" id="GO:0016556">
    <property type="term" value="P:mRNA modification"/>
    <property type="evidence" value="ECO:0007669"/>
    <property type="project" value="InterPro"/>
</dbReference>
<dbReference type="GO" id="GO:0006508">
    <property type="term" value="P:proteolysis"/>
    <property type="evidence" value="ECO:0007669"/>
    <property type="project" value="UniProtKB-KW"/>
</dbReference>
<dbReference type="GO" id="GO:0039657">
    <property type="term" value="P:symbiont-mediated suppression of host gene expression"/>
    <property type="evidence" value="ECO:0007669"/>
    <property type="project" value="UniProtKB-KW"/>
</dbReference>
<dbReference type="GO" id="GO:0039523">
    <property type="term" value="P:symbiont-mediated suppression of host mRNA transcription via inhibition of RNA polymerase II activity"/>
    <property type="evidence" value="ECO:0007669"/>
    <property type="project" value="UniProtKB-KW"/>
</dbReference>
<dbReference type="GO" id="GO:0039694">
    <property type="term" value="P:viral RNA genome replication"/>
    <property type="evidence" value="ECO:0007669"/>
    <property type="project" value="InterPro"/>
</dbReference>
<dbReference type="CDD" id="cd21557">
    <property type="entry name" value="Macro_X_Nsp3-like"/>
    <property type="match status" value="1"/>
</dbReference>
<dbReference type="CDD" id="cd23250">
    <property type="entry name" value="Togaviridae_RdRp"/>
    <property type="match status" value="1"/>
</dbReference>
<dbReference type="FunFam" id="3.40.220.10:FF:000015">
    <property type="entry name" value="Polyprotein P1234"/>
    <property type="match status" value="1"/>
</dbReference>
<dbReference type="FunFam" id="3.40.50.300:FF:001415">
    <property type="entry name" value="Polyprotein P1234"/>
    <property type="match status" value="1"/>
</dbReference>
<dbReference type="Gene3D" id="3.90.70.110">
    <property type="entry name" value="Alphavirus nsP2 protease domain"/>
    <property type="match status" value="1"/>
</dbReference>
<dbReference type="Gene3D" id="3.40.220.10">
    <property type="entry name" value="Leucine Aminopeptidase, subunit E, domain 1"/>
    <property type="match status" value="1"/>
</dbReference>
<dbReference type="Gene3D" id="3.40.50.300">
    <property type="entry name" value="P-loop containing nucleotide triphosphate hydrolases"/>
    <property type="match status" value="2"/>
</dbReference>
<dbReference type="Gene3D" id="3.40.50.150">
    <property type="entry name" value="Vaccinia Virus protein VP39"/>
    <property type="match status" value="1"/>
</dbReference>
<dbReference type="InterPro" id="IPR027351">
    <property type="entry name" value="(+)RNA_virus_helicase_core_dom"/>
</dbReference>
<dbReference type="InterPro" id="IPR002588">
    <property type="entry name" value="Alphavirus-like_MT_dom"/>
</dbReference>
<dbReference type="InterPro" id="IPR002620">
    <property type="entry name" value="Alphavirus_nsp2pro"/>
</dbReference>
<dbReference type="InterPro" id="IPR044936">
    <property type="entry name" value="Alphavirus_nsp2pro_sf"/>
</dbReference>
<dbReference type="InterPro" id="IPR043502">
    <property type="entry name" value="DNA/RNA_pol_sf"/>
</dbReference>
<dbReference type="InterPro" id="IPR002589">
    <property type="entry name" value="Macro_dom"/>
</dbReference>
<dbReference type="InterPro" id="IPR043472">
    <property type="entry name" value="Macro_dom-like"/>
</dbReference>
<dbReference type="InterPro" id="IPR044371">
    <property type="entry name" value="Macro_X_NSP3-like"/>
</dbReference>
<dbReference type="InterPro" id="IPR048891">
    <property type="entry name" value="nsP3_ZBD"/>
</dbReference>
<dbReference type="InterPro" id="IPR027417">
    <property type="entry name" value="P-loop_NTPase"/>
</dbReference>
<dbReference type="InterPro" id="IPR001788">
    <property type="entry name" value="RNA-dep_RNA_pol_alsuvir"/>
</dbReference>
<dbReference type="InterPro" id="IPR007094">
    <property type="entry name" value="RNA-dir_pol_PSvirus"/>
</dbReference>
<dbReference type="InterPro" id="IPR029063">
    <property type="entry name" value="SAM-dependent_MTases_sf"/>
</dbReference>
<dbReference type="InterPro" id="IPR047311">
    <property type="entry name" value="Togaviridae_RdRp"/>
</dbReference>
<dbReference type="InterPro" id="IPR049329">
    <property type="entry name" value="ToMV_Hel_N"/>
</dbReference>
<dbReference type="Pfam" id="PF01661">
    <property type="entry name" value="Macro"/>
    <property type="match status" value="1"/>
</dbReference>
<dbReference type="Pfam" id="PF20852">
    <property type="entry name" value="nsP3_ZBD"/>
    <property type="match status" value="1"/>
</dbReference>
<dbReference type="Pfam" id="PF01707">
    <property type="entry name" value="Peptidase_C9"/>
    <property type="match status" value="1"/>
</dbReference>
<dbReference type="Pfam" id="PF00978">
    <property type="entry name" value="RdRP_2"/>
    <property type="match status" value="1"/>
</dbReference>
<dbReference type="Pfam" id="PF20896">
    <property type="entry name" value="ToMV_Hel_N"/>
    <property type="match status" value="1"/>
</dbReference>
<dbReference type="Pfam" id="PF01443">
    <property type="entry name" value="Viral_helicase1"/>
    <property type="match status" value="1"/>
</dbReference>
<dbReference type="Pfam" id="PF01660">
    <property type="entry name" value="Vmethyltransf"/>
    <property type="match status" value="1"/>
</dbReference>
<dbReference type="SMART" id="SM00506">
    <property type="entry name" value="A1pp"/>
    <property type="match status" value="1"/>
</dbReference>
<dbReference type="SUPFAM" id="SSF56672">
    <property type="entry name" value="DNA/RNA polymerases"/>
    <property type="match status" value="1"/>
</dbReference>
<dbReference type="SUPFAM" id="SSF52949">
    <property type="entry name" value="Macro domain-like"/>
    <property type="match status" value="1"/>
</dbReference>
<dbReference type="SUPFAM" id="SSF52540">
    <property type="entry name" value="P-loop containing nucleoside triphosphate hydrolases"/>
    <property type="match status" value="1"/>
</dbReference>
<dbReference type="PROSITE" id="PS51743">
    <property type="entry name" value="ALPHAVIRUS_MT"/>
    <property type="match status" value="1"/>
</dbReference>
<dbReference type="PROSITE" id="PS51154">
    <property type="entry name" value="MACRO"/>
    <property type="match status" value="1"/>
</dbReference>
<dbReference type="PROSITE" id="PS51520">
    <property type="entry name" value="NSP2PRO"/>
    <property type="match status" value="1"/>
</dbReference>
<dbReference type="PROSITE" id="PS51657">
    <property type="entry name" value="PSRV_HELICASE"/>
    <property type="match status" value="1"/>
</dbReference>
<dbReference type="PROSITE" id="PS50507">
    <property type="entry name" value="RDRP_SSRNA_POS"/>
    <property type="match status" value="1"/>
</dbReference>